<reference key="1">
    <citation type="submission" date="2006-06" db="EMBL/GenBank/DDBJ databases">
        <title>Complete sequence of chromosome of Mycobacterium sp. MCS.</title>
        <authorList>
            <consortium name="US DOE Joint Genome Institute"/>
            <person name="Copeland A."/>
            <person name="Lucas S."/>
            <person name="Lapidus A."/>
            <person name="Barry K."/>
            <person name="Detter J.C."/>
            <person name="Glavina del Rio T."/>
            <person name="Hammon N."/>
            <person name="Israni S."/>
            <person name="Dalin E."/>
            <person name="Tice H."/>
            <person name="Pitluck S."/>
            <person name="Martinez M."/>
            <person name="Schmutz J."/>
            <person name="Larimer F."/>
            <person name="Land M."/>
            <person name="Hauser L."/>
            <person name="Kyrpides N."/>
            <person name="Kim E."/>
            <person name="Miller C.D."/>
            <person name="Hughes J.E."/>
            <person name="Anderson A.J."/>
            <person name="Sims R.C."/>
            <person name="Richardson P."/>
        </authorList>
    </citation>
    <scope>NUCLEOTIDE SEQUENCE [LARGE SCALE GENOMIC DNA]</scope>
    <source>
        <strain>MCS</strain>
    </source>
</reference>
<evidence type="ECO:0000255" key="1">
    <source>
        <dbReference type="HAMAP-Rule" id="MF_00081"/>
    </source>
</evidence>
<gene>
    <name evidence="1" type="primary">hrcA</name>
    <name type="ordered locus">Mmcs_3460</name>
</gene>
<name>HRCA_MYCSS</name>
<feature type="chain" id="PRO_1000010430" description="Heat-inducible transcription repressor HrcA">
    <location>
        <begin position="1"/>
        <end position="347"/>
    </location>
</feature>
<comment type="function">
    <text evidence="1">Negative regulator of class I heat shock genes (grpE-dnaK-dnaJ and groELS operons). Prevents heat-shock induction of these operons.</text>
</comment>
<comment type="similarity">
    <text evidence="1">Belongs to the HrcA family.</text>
</comment>
<accession>Q1B6B7</accession>
<protein>
    <recommendedName>
        <fullName evidence="1">Heat-inducible transcription repressor HrcA</fullName>
    </recommendedName>
</protein>
<sequence>MGSADDRRFEVLRAIVADFVATKEPIGSKTLVERHNLGVSSATVRNDMAVLEAEGYITQPHTSSGRVPTEKGYREFVDRLDDVKPLSSAERRAILKFLETGVDLDDVLRRAVRLLAQLTRQVAIVQYPTLSTSSVRHLEVVALTPARLLLVVITDTGRVDQRIVELGDAIDEHELATLRDLLGQALEGKRLSAASVAVSDLATHLSGSPGMSHRLADAVGRSATVLVETLVEHTEERLLLGGTANLTRNTADFGGSLRSVLEALEEQVVVLRLLAAQQEAGKVTVRIGHETEAEQMAGTSVVTTAYGSSGKVYGGMGVVGPTRMDYPGTIANVAAVALYIGEVLGTR</sequence>
<dbReference type="EMBL" id="CP000384">
    <property type="protein sequence ID" value="ABG09567.1"/>
    <property type="molecule type" value="Genomic_DNA"/>
</dbReference>
<dbReference type="SMR" id="Q1B6B7"/>
<dbReference type="KEGG" id="mmc:Mmcs_3460"/>
<dbReference type="HOGENOM" id="CLU_050019_2_0_11"/>
<dbReference type="BioCyc" id="MSP164756:G1G6O-3530-MONOMER"/>
<dbReference type="GO" id="GO:0003677">
    <property type="term" value="F:DNA binding"/>
    <property type="evidence" value="ECO:0007669"/>
    <property type="project" value="InterPro"/>
</dbReference>
<dbReference type="GO" id="GO:0045892">
    <property type="term" value="P:negative regulation of DNA-templated transcription"/>
    <property type="evidence" value="ECO:0007669"/>
    <property type="project" value="UniProtKB-UniRule"/>
</dbReference>
<dbReference type="FunFam" id="1.10.10.10:FF:000049">
    <property type="entry name" value="Heat-inducible transcription repressor HrcA"/>
    <property type="match status" value="1"/>
</dbReference>
<dbReference type="Gene3D" id="3.30.450.40">
    <property type="match status" value="1"/>
</dbReference>
<dbReference type="Gene3D" id="3.30.390.60">
    <property type="entry name" value="Heat-inducible transcription repressor hrca homolog, domain 3"/>
    <property type="match status" value="1"/>
</dbReference>
<dbReference type="Gene3D" id="1.10.10.10">
    <property type="entry name" value="Winged helix-like DNA-binding domain superfamily/Winged helix DNA-binding domain"/>
    <property type="match status" value="1"/>
</dbReference>
<dbReference type="HAMAP" id="MF_00081">
    <property type="entry name" value="HrcA"/>
    <property type="match status" value="1"/>
</dbReference>
<dbReference type="InterPro" id="IPR029016">
    <property type="entry name" value="GAF-like_dom_sf"/>
</dbReference>
<dbReference type="InterPro" id="IPR002571">
    <property type="entry name" value="HrcA"/>
</dbReference>
<dbReference type="InterPro" id="IPR021153">
    <property type="entry name" value="HrcA_C"/>
</dbReference>
<dbReference type="InterPro" id="IPR036388">
    <property type="entry name" value="WH-like_DNA-bd_sf"/>
</dbReference>
<dbReference type="InterPro" id="IPR036390">
    <property type="entry name" value="WH_DNA-bd_sf"/>
</dbReference>
<dbReference type="InterPro" id="IPR023120">
    <property type="entry name" value="WHTH_transcript_rep_HrcA_IDD"/>
</dbReference>
<dbReference type="NCBIfam" id="TIGR00331">
    <property type="entry name" value="hrcA"/>
    <property type="match status" value="1"/>
</dbReference>
<dbReference type="PANTHER" id="PTHR34824">
    <property type="entry name" value="HEAT-INDUCIBLE TRANSCRIPTION REPRESSOR HRCA"/>
    <property type="match status" value="1"/>
</dbReference>
<dbReference type="PANTHER" id="PTHR34824:SF1">
    <property type="entry name" value="HEAT-INDUCIBLE TRANSCRIPTION REPRESSOR HRCA"/>
    <property type="match status" value="1"/>
</dbReference>
<dbReference type="Pfam" id="PF01628">
    <property type="entry name" value="HrcA"/>
    <property type="match status" value="1"/>
</dbReference>
<dbReference type="PIRSF" id="PIRSF005485">
    <property type="entry name" value="HrcA"/>
    <property type="match status" value="1"/>
</dbReference>
<dbReference type="SUPFAM" id="SSF55781">
    <property type="entry name" value="GAF domain-like"/>
    <property type="match status" value="1"/>
</dbReference>
<dbReference type="SUPFAM" id="SSF46785">
    <property type="entry name" value="Winged helix' DNA-binding domain"/>
    <property type="match status" value="1"/>
</dbReference>
<organism>
    <name type="scientific">Mycobacterium sp. (strain MCS)</name>
    <dbReference type="NCBI Taxonomy" id="164756"/>
    <lineage>
        <taxon>Bacteria</taxon>
        <taxon>Bacillati</taxon>
        <taxon>Actinomycetota</taxon>
        <taxon>Actinomycetes</taxon>
        <taxon>Mycobacteriales</taxon>
        <taxon>Mycobacteriaceae</taxon>
        <taxon>Mycobacterium</taxon>
    </lineage>
</organism>
<keyword id="KW-0678">Repressor</keyword>
<keyword id="KW-0346">Stress response</keyword>
<keyword id="KW-0804">Transcription</keyword>
<keyword id="KW-0805">Transcription regulation</keyword>
<proteinExistence type="inferred from homology"/>